<organism>
    <name type="scientific">Wolbachia sp. subsp. Drosophila simulans (strain wRi)</name>
    <dbReference type="NCBI Taxonomy" id="66084"/>
    <lineage>
        <taxon>Bacteria</taxon>
        <taxon>Pseudomonadati</taxon>
        <taxon>Pseudomonadota</taxon>
        <taxon>Alphaproteobacteria</taxon>
        <taxon>Rickettsiales</taxon>
        <taxon>Anaplasmataceae</taxon>
        <taxon>Wolbachieae</taxon>
        <taxon>Wolbachia</taxon>
    </lineage>
</organism>
<gene>
    <name evidence="1" type="primary">rsmH</name>
    <name type="synonym">mraW</name>
    <name type="ordered locus">WRi_000850</name>
</gene>
<dbReference type="EC" id="2.1.1.199" evidence="1"/>
<dbReference type="EMBL" id="CP001391">
    <property type="protein sequence ID" value="ACN94940.1"/>
    <property type="molecule type" value="Genomic_DNA"/>
</dbReference>
<dbReference type="RefSeq" id="WP_007548285.1">
    <property type="nucleotide sequence ID" value="NZ_MKIF01000035.1"/>
</dbReference>
<dbReference type="SMR" id="C0R598"/>
<dbReference type="STRING" id="66084.WRi_000850"/>
<dbReference type="KEGG" id="wri:WRi_000850"/>
<dbReference type="HOGENOM" id="CLU_038422_1_1_5"/>
<dbReference type="Proteomes" id="UP000001293">
    <property type="component" value="Chromosome"/>
</dbReference>
<dbReference type="GO" id="GO:0005737">
    <property type="term" value="C:cytoplasm"/>
    <property type="evidence" value="ECO:0007669"/>
    <property type="project" value="UniProtKB-SubCell"/>
</dbReference>
<dbReference type="GO" id="GO:0071424">
    <property type="term" value="F:rRNA (cytosine-N4-)-methyltransferase activity"/>
    <property type="evidence" value="ECO:0007669"/>
    <property type="project" value="UniProtKB-UniRule"/>
</dbReference>
<dbReference type="GO" id="GO:0070475">
    <property type="term" value="P:rRNA base methylation"/>
    <property type="evidence" value="ECO:0007669"/>
    <property type="project" value="UniProtKB-UniRule"/>
</dbReference>
<dbReference type="FunFam" id="1.10.150.170:FF:000003">
    <property type="entry name" value="Ribosomal RNA small subunit methyltransferase H"/>
    <property type="match status" value="1"/>
</dbReference>
<dbReference type="Gene3D" id="1.10.150.170">
    <property type="entry name" value="Putative methyltransferase TM0872, insert domain"/>
    <property type="match status" value="1"/>
</dbReference>
<dbReference type="Gene3D" id="3.40.50.150">
    <property type="entry name" value="Vaccinia Virus protein VP39"/>
    <property type="match status" value="1"/>
</dbReference>
<dbReference type="HAMAP" id="MF_01007">
    <property type="entry name" value="16SrRNA_methyltr_H"/>
    <property type="match status" value="1"/>
</dbReference>
<dbReference type="InterPro" id="IPR002903">
    <property type="entry name" value="RsmH"/>
</dbReference>
<dbReference type="InterPro" id="IPR023397">
    <property type="entry name" value="SAM-dep_MeTrfase_MraW_recog"/>
</dbReference>
<dbReference type="InterPro" id="IPR029063">
    <property type="entry name" value="SAM-dependent_MTases_sf"/>
</dbReference>
<dbReference type="NCBIfam" id="TIGR00006">
    <property type="entry name" value="16S rRNA (cytosine(1402)-N(4))-methyltransferase RsmH"/>
    <property type="match status" value="1"/>
</dbReference>
<dbReference type="PANTHER" id="PTHR11265:SF0">
    <property type="entry name" value="12S RRNA N4-METHYLCYTIDINE METHYLTRANSFERASE"/>
    <property type="match status" value="1"/>
</dbReference>
<dbReference type="PANTHER" id="PTHR11265">
    <property type="entry name" value="S-ADENOSYL-METHYLTRANSFERASE MRAW"/>
    <property type="match status" value="1"/>
</dbReference>
<dbReference type="Pfam" id="PF01795">
    <property type="entry name" value="Methyltransf_5"/>
    <property type="match status" value="1"/>
</dbReference>
<dbReference type="PIRSF" id="PIRSF004486">
    <property type="entry name" value="MraW"/>
    <property type="match status" value="1"/>
</dbReference>
<dbReference type="SUPFAM" id="SSF81799">
    <property type="entry name" value="Putative methyltransferase TM0872, insert domain"/>
    <property type="match status" value="1"/>
</dbReference>
<dbReference type="SUPFAM" id="SSF53335">
    <property type="entry name" value="S-adenosyl-L-methionine-dependent methyltransferases"/>
    <property type="match status" value="1"/>
</dbReference>
<sequence>MTHTPVLLKEMLSLLSPQDGGIYVDATFGAGGYSKAILESADCKVYAIDRDETVTKFYDDLSVRYPDRIKLFIEKFSNIKNLLDSNNIEGIDGIVFDIGVSSMQLDNGDRGFSFLHDGPLDMSMDNSSYINASTFVNALREEEIANTIYNYGGERHSRKIARAIVNARKKKTIKTTFELADIVRSVVFRGKSKIDPATRTFQAIRIWVNDELGELEKGIKAASEILSENGKLIVVTFHSLEDRIVKTFFKDLCATDCKTFSLLNKKVIEASIEEVSANPRSRSAKLRAIQRLS</sequence>
<comment type="function">
    <text evidence="1">Specifically methylates the N4 position of cytidine in position 1402 (C1402) of 16S rRNA.</text>
</comment>
<comment type="catalytic activity">
    <reaction evidence="1">
        <text>cytidine(1402) in 16S rRNA + S-adenosyl-L-methionine = N(4)-methylcytidine(1402) in 16S rRNA + S-adenosyl-L-homocysteine + H(+)</text>
        <dbReference type="Rhea" id="RHEA:42928"/>
        <dbReference type="Rhea" id="RHEA-COMP:10286"/>
        <dbReference type="Rhea" id="RHEA-COMP:10287"/>
        <dbReference type="ChEBI" id="CHEBI:15378"/>
        <dbReference type="ChEBI" id="CHEBI:57856"/>
        <dbReference type="ChEBI" id="CHEBI:59789"/>
        <dbReference type="ChEBI" id="CHEBI:74506"/>
        <dbReference type="ChEBI" id="CHEBI:82748"/>
        <dbReference type="EC" id="2.1.1.199"/>
    </reaction>
</comment>
<comment type="subcellular location">
    <subcellularLocation>
        <location evidence="1">Cytoplasm</location>
    </subcellularLocation>
</comment>
<comment type="similarity">
    <text evidence="1">Belongs to the methyltransferase superfamily. RsmH family.</text>
</comment>
<evidence type="ECO:0000255" key="1">
    <source>
        <dbReference type="HAMAP-Rule" id="MF_01007"/>
    </source>
</evidence>
<keyword id="KW-0963">Cytoplasm</keyword>
<keyword id="KW-0489">Methyltransferase</keyword>
<keyword id="KW-0698">rRNA processing</keyword>
<keyword id="KW-0949">S-adenosyl-L-methionine</keyword>
<keyword id="KW-0808">Transferase</keyword>
<feature type="chain" id="PRO_1000148842" description="Ribosomal RNA small subunit methyltransferase H">
    <location>
        <begin position="1"/>
        <end position="293"/>
    </location>
</feature>
<feature type="binding site" evidence="1">
    <location>
        <begin position="31"/>
        <end position="33"/>
    </location>
    <ligand>
        <name>S-adenosyl-L-methionine</name>
        <dbReference type="ChEBI" id="CHEBI:59789"/>
    </ligand>
</feature>
<feature type="binding site" evidence="1">
    <location>
        <position position="49"/>
    </location>
    <ligand>
        <name>S-adenosyl-L-methionine</name>
        <dbReference type="ChEBI" id="CHEBI:59789"/>
    </ligand>
</feature>
<feature type="binding site" evidence="1">
    <location>
        <position position="76"/>
    </location>
    <ligand>
        <name>S-adenosyl-L-methionine</name>
        <dbReference type="ChEBI" id="CHEBI:59789"/>
    </ligand>
</feature>
<feature type="binding site" evidence="1">
    <location>
        <position position="97"/>
    </location>
    <ligand>
        <name>S-adenosyl-L-methionine</name>
        <dbReference type="ChEBI" id="CHEBI:59789"/>
    </ligand>
</feature>
<feature type="binding site" evidence="1">
    <location>
        <position position="104"/>
    </location>
    <ligand>
        <name>S-adenosyl-L-methionine</name>
        <dbReference type="ChEBI" id="CHEBI:59789"/>
    </ligand>
</feature>
<accession>C0R598</accession>
<proteinExistence type="inferred from homology"/>
<name>RSMH_WOLWR</name>
<protein>
    <recommendedName>
        <fullName evidence="1">Ribosomal RNA small subunit methyltransferase H</fullName>
        <ecNumber evidence="1">2.1.1.199</ecNumber>
    </recommendedName>
    <alternativeName>
        <fullName evidence="1">16S rRNA m(4)C1402 methyltransferase</fullName>
    </alternativeName>
    <alternativeName>
        <fullName evidence="1">rRNA (cytosine-N(4)-)-methyltransferase RsmH</fullName>
    </alternativeName>
</protein>
<reference key="1">
    <citation type="journal article" date="2009" name="Proc. Natl. Acad. Sci. U.S.A.">
        <title>The mosaic genome structure of the Wolbachia wRi strain infecting Drosophila simulans.</title>
        <authorList>
            <person name="Klasson L."/>
            <person name="Westberg J."/>
            <person name="Sapountzis P."/>
            <person name="Naeslund K."/>
            <person name="Lutnaes Y."/>
            <person name="Darby A.C."/>
            <person name="Veneti Z."/>
            <person name="Chen L."/>
            <person name="Braig H.R."/>
            <person name="Garrett R."/>
            <person name="Bourtzis K."/>
            <person name="Andersson S.G."/>
        </authorList>
    </citation>
    <scope>NUCLEOTIDE SEQUENCE [LARGE SCALE GENOMIC DNA]</scope>
    <source>
        <strain>wRi</strain>
    </source>
</reference>